<evidence type="ECO:0000255" key="1">
    <source>
        <dbReference type="HAMAP-Rule" id="MF_00539"/>
    </source>
</evidence>
<evidence type="ECO:0000256" key="2">
    <source>
        <dbReference type="SAM" id="MobiDB-lite"/>
    </source>
</evidence>
<evidence type="ECO:0000305" key="3"/>
<keyword id="KW-0687">Ribonucleoprotein</keyword>
<keyword id="KW-0689">Ribosomal protein</keyword>
<sequence>MAHKKAGGSSRNGRDSAGRRLGVKKFGSEAVIPGNIIVRQRGTKWHPGTNVGMGKDHTLFALVPGKVQFETRRGREFVTVVPLAQAAE</sequence>
<reference key="1">
    <citation type="submission" date="2008-04" db="EMBL/GenBank/DDBJ databases">
        <title>Complete sequence of chromosome of Methylobacterium populi BJ001.</title>
        <authorList>
            <consortium name="US DOE Joint Genome Institute"/>
            <person name="Copeland A."/>
            <person name="Lucas S."/>
            <person name="Lapidus A."/>
            <person name="Glavina del Rio T."/>
            <person name="Dalin E."/>
            <person name="Tice H."/>
            <person name="Bruce D."/>
            <person name="Goodwin L."/>
            <person name="Pitluck S."/>
            <person name="Chertkov O."/>
            <person name="Brettin T."/>
            <person name="Detter J.C."/>
            <person name="Han C."/>
            <person name="Kuske C.R."/>
            <person name="Schmutz J."/>
            <person name="Larimer F."/>
            <person name="Land M."/>
            <person name="Hauser L."/>
            <person name="Kyrpides N."/>
            <person name="Mikhailova N."/>
            <person name="Marx C."/>
            <person name="Richardson P."/>
        </authorList>
    </citation>
    <scope>NUCLEOTIDE SEQUENCE [LARGE SCALE GENOMIC DNA]</scope>
    <source>
        <strain>ATCC BAA-705 / NCIMB 13946 / BJ001</strain>
    </source>
</reference>
<protein>
    <recommendedName>
        <fullName evidence="1">Large ribosomal subunit protein bL27</fullName>
    </recommendedName>
    <alternativeName>
        <fullName evidence="3">50S ribosomal protein L27</fullName>
    </alternativeName>
</protein>
<accession>B1ZL17</accession>
<proteinExistence type="inferred from homology"/>
<comment type="similarity">
    <text evidence="1">Belongs to the bacterial ribosomal protein bL27 family.</text>
</comment>
<feature type="chain" id="PRO_1000128771" description="Large ribosomal subunit protein bL27">
    <location>
        <begin position="1"/>
        <end position="88"/>
    </location>
</feature>
<feature type="region of interest" description="Disordered" evidence="2">
    <location>
        <begin position="1"/>
        <end position="23"/>
    </location>
</feature>
<name>RL27_METPB</name>
<organism>
    <name type="scientific">Methylorubrum populi (strain ATCC BAA-705 / NCIMB 13946 / BJ001)</name>
    <name type="common">Methylobacterium populi</name>
    <dbReference type="NCBI Taxonomy" id="441620"/>
    <lineage>
        <taxon>Bacteria</taxon>
        <taxon>Pseudomonadati</taxon>
        <taxon>Pseudomonadota</taxon>
        <taxon>Alphaproteobacteria</taxon>
        <taxon>Hyphomicrobiales</taxon>
        <taxon>Methylobacteriaceae</taxon>
        <taxon>Methylorubrum</taxon>
    </lineage>
</organism>
<dbReference type="EMBL" id="CP001029">
    <property type="protein sequence ID" value="ACB83017.1"/>
    <property type="molecule type" value="Genomic_DNA"/>
</dbReference>
<dbReference type="RefSeq" id="WP_012456615.1">
    <property type="nucleotide sequence ID" value="NC_010725.1"/>
</dbReference>
<dbReference type="SMR" id="B1ZL17"/>
<dbReference type="STRING" id="441620.Mpop_4921"/>
<dbReference type="KEGG" id="mpo:Mpop_4921"/>
<dbReference type="eggNOG" id="COG0211">
    <property type="taxonomic scope" value="Bacteria"/>
</dbReference>
<dbReference type="HOGENOM" id="CLU_095424_4_1_5"/>
<dbReference type="OrthoDB" id="9803474at2"/>
<dbReference type="Proteomes" id="UP000007136">
    <property type="component" value="Chromosome"/>
</dbReference>
<dbReference type="GO" id="GO:0022625">
    <property type="term" value="C:cytosolic large ribosomal subunit"/>
    <property type="evidence" value="ECO:0007669"/>
    <property type="project" value="TreeGrafter"/>
</dbReference>
<dbReference type="GO" id="GO:0003735">
    <property type="term" value="F:structural constituent of ribosome"/>
    <property type="evidence" value="ECO:0007669"/>
    <property type="project" value="InterPro"/>
</dbReference>
<dbReference type="GO" id="GO:0006412">
    <property type="term" value="P:translation"/>
    <property type="evidence" value="ECO:0007669"/>
    <property type="project" value="UniProtKB-UniRule"/>
</dbReference>
<dbReference type="FunFam" id="2.40.50.100:FF:000020">
    <property type="entry name" value="50S ribosomal protein L27"/>
    <property type="match status" value="1"/>
</dbReference>
<dbReference type="Gene3D" id="2.40.50.100">
    <property type="match status" value="1"/>
</dbReference>
<dbReference type="HAMAP" id="MF_00539">
    <property type="entry name" value="Ribosomal_bL27"/>
    <property type="match status" value="1"/>
</dbReference>
<dbReference type="InterPro" id="IPR001684">
    <property type="entry name" value="Ribosomal_bL27"/>
</dbReference>
<dbReference type="InterPro" id="IPR018261">
    <property type="entry name" value="Ribosomal_bL27_CS"/>
</dbReference>
<dbReference type="NCBIfam" id="TIGR00062">
    <property type="entry name" value="L27"/>
    <property type="match status" value="1"/>
</dbReference>
<dbReference type="PANTHER" id="PTHR15893:SF0">
    <property type="entry name" value="LARGE RIBOSOMAL SUBUNIT PROTEIN BL27M"/>
    <property type="match status" value="1"/>
</dbReference>
<dbReference type="PANTHER" id="PTHR15893">
    <property type="entry name" value="RIBOSOMAL PROTEIN L27"/>
    <property type="match status" value="1"/>
</dbReference>
<dbReference type="Pfam" id="PF01016">
    <property type="entry name" value="Ribosomal_L27"/>
    <property type="match status" value="1"/>
</dbReference>
<dbReference type="PRINTS" id="PR00063">
    <property type="entry name" value="RIBOSOMALL27"/>
</dbReference>
<dbReference type="SUPFAM" id="SSF110324">
    <property type="entry name" value="Ribosomal L27 protein-like"/>
    <property type="match status" value="1"/>
</dbReference>
<dbReference type="PROSITE" id="PS00831">
    <property type="entry name" value="RIBOSOMAL_L27"/>
    <property type="match status" value="1"/>
</dbReference>
<gene>
    <name evidence="1" type="primary">rpmA</name>
    <name type="ordered locus">Mpop_4921</name>
</gene>